<accession>Q5L5F9</accession>
<organism>
    <name type="scientific">Chlamydia abortus (strain DSM 27085 / S26/3)</name>
    <name type="common">Chlamydophila abortus</name>
    <dbReference type="NCBI Taxonomy" id="218497"/>
    <lineage>
        <taxon>Bacteria</taxon>
        <taxon>Pseudomonadati</taxon>
        <taxon>Chlamydiota</taxon>
        <taxon>Chlamydiia</taxon>
        <taxon>Chlamydiales</taxon>
        <taxon>Chlamydiaceae</taxon>
        <taxon>Chlamydia/Chlamydophila group</taxon>
        <taxon>Chlamydia</taxon>
    </lineage>
</organism>
<protein>
    <recommendedName>
        <fullName evidence="1">Biotin synthase</fullName>
        <ecNumber evidence="1">2.8.1.6</ecNumber>
    </recommendedName>
</protein>
<gene>
    <name evidence="1" type="primary">bioB</name>
    <name type="ordered locus">CAB685</name>
</gene>
<proteinExistence type="inferred from homology"/>
<evidence type="ECO:0000255" key="1">
    <source>
        <dbReference type="HAMAP-Rule" id="MF_01694"/>
    </source>
</evidence>
<evidence type="ECO:0000255" key="2">
    <source>
        <dbReference type="PROSITE-ProRule" id="PRU01266"/>
    </source>
</evidence>
<sequence>METHSELWSLEAIKEVYNTPIFELIHRANAILRSNFPHSELQTCYLVSIKTGGCTEDCAYCAQSSRYQTHVKPEPMMKITEVLDRAKQAIRAGATRVCLGAAWREVKDNHQFDRTLEMIKGITDMGAEVCCTLGMLTPSQAEKLFEAGLYAYNHNLDSSEGFYKTIITTRKYEDRLRTLDIVEKSGLHVCCGGIIGMGETVEDRVELLHNLARRERMPESVPVNVLWPIKGTPLYDQASISFWEILRTIATARIVFPQSMVRLAAGRAFLSVEQQTLCFIAGANSIFYGEKLLTVDNNDMDADTAMLNLLGMRHRPSFSMERGQPCQSVTC</sequence>
<reference key="1">
    <citation type="journal article" date="2005" name="Genome Res.">
        <title>The Chlamydophila abortus genome sequence reveals an array of variable proteins that contribute to interspecies variation.</title>
        <authorList>
            <person name="Thomson N.R."/>
            <person name="Yeats C."/>
            <person name="Bell K."/>
            <person name="Holden M.T.G."/>
            <person name="Bentley S.D."/>
            <person name="Livingstone M."/>
            <person name="Cerdeno-Tarraga A.-M."/>
            <person name="Harris B."/>
            <person name="Doggett J."/>
            <person name="Ormond D."/>
            <person name="Mungall K."/>
            <person name="Clarke K."/>
            <person name="Feltwell T."/>
            <person name="Hance Z."/>
            <person name="Sanders M."/>
            <person name="Quail M.A."/>
            <person name="Price C."/>
            <person name="Barrell B.G."/>
            <person name="Parkhill J."/>
            <person name="Longbottom D."/>
        </authorList>
    </citation>
    <scope>NUCLEOTIDE SEQUENCE [LARGE SCALE GENOMIC DNA]</scope>
    <source>
        <strain>DSM 27085 / S26/3</strain>
    </source>
</reference>
<name>BIOB_CHLAB</name>
<dbReference type="EC" id="2.8.1.6" evidence="1"/>
<dbReference type="EMBL" id="CR848038">
    <property type="protein sequence ID" value="CAH64132.1"/>
    <property type="molecule type" value="Genomic_DNA"/>
</dbReference>
<dbReference type="RefSeq" id="WP_011097261.1">
    <property type="nucleotide sequence ID" value="NC_004552.2"/>
</dbReference>
<dbReference type="SMR" id="Q5L5F9"/>
<dbReference type="KEGG" id="cab:CAB685"/>
<dbReference type="eggNOG" id="COG0502">
    <property type="taxonomic scope" value="Bacteria"/>
</dbReference>
<dbReference type="HOGENOM" id="CLU_033172_1_2_0"/>
<dbReference type="OrthoDB" id="9786826at2"/>
<dbReference type="UniPathway" id="UPA00078">
    <property type="reaction ID" value="UER00162"/>
</dbReference>
<dbReference type="Proteomes" id="UP000001012">
    <property type="component" value="Chromosome"/>
</dbReference>
<dbReference type="GO" id="GO:0051537">
    <property type="term" value="F:2 iron, 2 sulfur cluster binding"/>
    <property type="evidence" value="ECO:0007669"/>
    <property type="project" value="UniProtKB-KW"/>
</dbReference>
<dbReference type="GO" id="GO:0051539">
    <property type="term" value="F:4 iron, 4 sulfur cluster binding"/>
    <property type="evidence" value="ECO:0007669"/>
    <property type="project" value="UniProtKB-KW"/>
</dbReference>
<dbReference type="GO" id="GO:0004076">
    <property type="term" value="F:biotin synthase activity"/>
    <property type="evidence" value="ECO:0007669"/>
    <property type="project" value="UniProtKB-UniRule"/>
</dbReference>
<dbReference type="GO" id="GO:0005506">
    <property type="term" value="F:iron ion binding"/>
    <property type="evidence" value="ECO:0007669"/>
    <property type="project" value="UniProtKB-UniRule"/>
</dbReference>
<dbReference type="GO" id="GO:0009102">
    <property type="term" value="P:biotin biosynthetic process"/>
    <property type="evidence" value="ECO:0007669"/>
    <property type="project" value="UniProtKB-UniRule"/>
</dbReference>
<dbReference type="CDD" id="cd01335">
    <property type="entry name" value="Radical_SAM"/>
    <property type="match status" value="1"/>
</dbReference>
<dbReference type="Gene3D" id="3.20.20.70">
    <property type="entry name" value="Aldolase class I"/>
    <property type="match status" value="1"/>
</dbReference>
<dbReference type="HAMAP" id="MF_01694">
    <property type="entry name" value="BioB"/>
    <property type="match status" value="1"/>
</dbReference>
<dbReference type="InterPro" id="IPR013785">
    <property type="entry name" value="Aldolase_TIM"/>
</dbReference>
<dbReference type="InterPro" id="IPR010722">
    <property type="entry name" value="BATS_dom"/>
</dbReference>
<dbReference type="InterPro" id="IPR002684">
    <property type="entry name" value="Biotin_synth/BioAB"/>
</dbReference>
<dbReference type="InterPro" id="IPR024177">
    <property type="entry name" value="Biotin_synthase"/>
</dbReference>
<dbReference type="InterPro" id="IPR006638">
    <property type="entry name" value="Elp3/MiaA/NifB-like_rSAM"/>
</dbReference>
<dbReference type="InterPro" id="IPR007197">
    <property type="entry name" value="rSAM"/>
</dbReference>
<dbReference type="NCBIfam" id="TIGR00433">
    <property type="entry name" value="bioB"/>
    <property type="match status" value="1"/>
</dbReference>
<dbReference type="PANTHER" id="PTHR22976">
    <property type="entry name" value="BIOTIN SYNTHASE"/>
    <property type="match status" value="1"/>
</dbReference>
<dbReference type="PANTHER" id="PTHR22976:SF2">
    <property type="entry name" value="BIOTIN SYNTHASE, MITOCHONDRIAL"/>
    <property type="match status" value="1"/>
</dbReference>
<dbReference type="Pfam" id="PF06968">
    <property type="entry name" value="BATS"/>
    <property type="match status" value="1"/>
</dbReference>
<dbReference type="Pfam" id="PF04055">
    <property type="entry name" value="Radical_SAM"/>
    <property type="match status" value="1"/>
</dbReference>
<dbReference type="PIRSF" id="PIRSF001619">
    <property type="entry name" value="Biotin_synth"/>
    <property type="match status" value="1"/>
</dbReference>
<dbReference type="SFLD" id="SFLDF00272">
    <property type="entry name" value="biotin_synthase"/>
    <property type="match status" value="1"/>
</dbReference>
<dbReference type="SFLD" id="SFLDS00029">
    <property type="entry name" value="Radical_SAM"/>
    <property type="match status" value="1"/>
</dbReference>
<dbReference type="SMART" id="SM00876">
    <property type="entry name" value="BATS"/>
    <property type="match status" value="1"/>
</dbReference>
<dbReference type="SMART" id="SM00729">
    <property type="entry name" value="Elp3"/>
    <property type="match status" value="1"/>
</dbReference>
<dbReference type="SUPFAM" id="SSF102114">
    <property type="entry name" value="Radical SAM enzymes"/>
    <property type="match status" value="1"/>
</dbReference>
<dbReference type="PROSITE" id="PS51918">
    <property type="entry name" value="RADICAL_SAM"/>
    <property type="match status" value="1"/>
</dbReference>
<comment type="function">
    <text evidence="1">Catalyzes the conversion of dethiobiotin (DTB) to biotin by the insertion of a sulfur atom into dethiobiotin via a radical-based mechanism.</text>
</comment>
<comment type="catalytic activity">
    <reaction evidence="1">
        <text>(4R,5S)-dethiobiotin + (sulfur carrier)-SH + 2 reduced [2Fe-2S]-[ferredoxin] + 2 S-adenosyl-L-methionine = (sulfur carrier)-H + biotin + 2 5'-deoxyadenosine + 2 L-methionine + 2 oxidized [2Fe-2S]-[ferredoxin]</text>
        <dbReference type="Rhea" id="RHEA:22060"/>
        <dbReference type="Rhea" id="RHEA-COMP:10000"/>
        <dbReference type="Rhea" id="RHEA-COMP:10001"/>
        <dbReference type="Rhea" id="RHEA-COMP:14737"/>
        <dbReference type="Rhea" id="RHEA-COMP:14739"/>
        <dbReference type="ChEBI" id="CHEBI:17319"/>
        <dbReference type="ChEBI" id="CHEBI:29917"/>
        <dbReference type="ChEBI" id="CHEBI:33737"/>
        <dbReference type="ChEBI" id="CHEBI:33738"/>
        <dbReference type="ChEBI" id="CHEBI:57586"/>
        <dbReference type="ChEBI" id="CHEBI:57844"/>
        <dbReference type="ChEBI" id="CHEBI:59789"/>
        <dbReference type="ChEBI" id="CHEBI:64428"/>
        <dbReference type="ChEBI" id="CHEBI:149473"/>
        <dbReference type="EC" id="2.8.1.6"/>
    </reaction>
</comment>
<comment type="cofactor">
    <cofactor evidence="1">
        <name>[4Fe-4S] cluster</name>
        <dbReference type="ChEBI" id="CHEBI:49883"/>
    </cofactor>
    <text evidence="1">Binds 1 [4Fe-4S] cluster. The cluster is coordinated with 3 cysteines and an exchangeable S-adenosyl-L-methionine.</text>
</comment>
<comment type="cofactor">
    <cofactor evidence="1">
        <name>[2Fe-2S] cluster</name>
        <dbReference type="ChEBI" id="CHEBI:190135"/>
    </cofactor>
    <text evidence="1">Binds 1 [2Fe-2S] cluster. The cluster is coordinated with 3 cysteines and 1 arginine.</text>
</comment>
<comment type="pathway">
    <text evidence="1">Cofactor biosynthesis; biotin biosynthesis; biotin from 7,8-diaminononanoate: step 2/2.</text>
</comment>
<comment type="subunit">
    <text evidence="1">Homodimer.</text>
</comment>
<comment type="similarity">
    <text evidence="1">Belongs to the radical SAM superfamily. Biotin synthase family.</text>
</comment>
<feature type="chain" id="PRO_0000381296" description="Biotin synthase">
    <location>
        <begin position="1"/>
        <end position="331"/>
    </location>
</feature>
<feature type="domain" description="Radical SAM core" evidence="2">
    <location>
        <begin position="39"/>
        <end position="264"/>
    </location>
</feature>
<feature type="binding site" evidence="1">
    <location>
        <position position="54"/>
    </location>
    <ligand>
        <name>[4Fe-4S] cluster</name>
        <dbReference type="ChEBI" id="CHEBI:49883"/>
        <note>4Fe-4S-S-AdoMet</note>
    </ligand>
</feature>
<feature type="binding site" evidence="1">
    <location>
        <position position="58"/>
    </location>
    <ligand>
        <name>[4Fe-4S] cluster</name>
        <dbReference type="ChEBI" id="CHEBI:49883"/>
        <note>4Fe-4S-S-AdoMet</note>
    </ligand>
</feature>
<feature type="binding site" evidence="1">
    <location>
        <position position="61"/>
    </location>
    <ligand>
        <name>[4Fe-4S] cluster</name>
        <dbReference type="ChEBI" id="CHEBI:49883"/>
        <note>4Fe-4S-S-AdoMet</note>
    </ligand>
</feature>
<feature type="binding site" evidence="1">
    <location>
        <position position="98"/>
    </location>
    <ligand>
        <name>[2Fe-2S] cluster</name>
        <dbReference type="ChEBI" id="CHEBI:190135"/>
    </ligand>
</feature>
<feature type="binding site" evidence="1">
    <location>
        <position position="130"/>
    </location>
    <ligand>
        <name>[2Fe-2S] cluster</name>
        <dbReference type="ChEBI" id="CHEBI:190135"/>
    </ligand>
</feature>
<feature type="binding site" evidence="1">
    <location>
        <position position="190"/>
    </location>
    <ligand>
        <name>[2Fe-2S] cluster</name>
        <dbReference type="ChEBI" id="CHEBI:190135"/>
    </ligand>
</feature>
<feature type="binding site" evidence="1">
    <location>
        <position position="262"/>
    </location>
    <ligand>
        <name>[2Fe-2S] cluster</name>
        <dbReference type="ChEBI" id="CHEBI:190135"/>
    </ligand>
</feature>
<keyword id="KW-0001">2Fe-2S</keyword>
<keyword id="KW-0004">4Fe-4S</keyword>
<keyword id="KW-0093">Biotin biosynthesis</keyword>
<keyword id="KW-0408">Iron</keyword>
<keyword id="KW-0411">Iron-sulfur</keyword>
<keyword id="KW-0479">Metal-binding</keyword>
<keyword id="KW-0949">S-adenosyl-L-methionine</keyword>
<keyword id="KW-0808">Transferase</keyword>